<keyword id="KW-0002">3D-structure</keyword>
<keyword id="KW-0238">DNA-binding</keyword>
<keyword id="KW-1185">Reference proteome</keyword>
<keyword id="KW-0678">Repressor</keyword>
<keyword id="KW-1277">Toxin-antitoxin system</keyword>
<keyword id="KW-0804">Transcription</keyword>
<keyword id="KW-0805">Transcription regulation</keyword>
<evidence type="ECO:0000269" key="1">
    <source>
    </source>
</evidence>
<evidence type="ECO:0000269" key="2">
    <source>
    </source>
</evidence>
<evidence type="ECO:0000305" key="3"/>
<evidence type="ECO:0007829" key="4">
    <source>
        <dbReference type="PDB" id="3G5O"/>
    </source>
</evidence>
<organism>
    <name type="scientific">Mycobacterium tuberculosis (strain ATCC 25618 / H37Rv)</name>
    <dbReference type="NCBI Taxonomy" id="83332"/>
    <lineage>
        <taxon>Bacteria</taxon>
        <taxon>Bacillati</taxon>
        <taxon>Actinomycetota</taxon>
        <taxon>Actinomycetes</taxon>
        <taxon>Mycobacteriales</taxon>
        <taxon>Mycobacteriaceae</taxon>
        <taxon>Mycobacterium</taxon>
        <taxon>Mycobacterium tuberculosis complex</taxon>
    </lineage>
</organism>
<protein>
    <recommendedName>
        <fullName>Antitoxin RelF</fullName>
    </recommendedName>
</protein>
<name>RELF_MYCTU</name>
<proteinExistence type="evidence at protein level"/>
<reference key="1">
    <citation type="journal article" date="1998" name="Nature">
        <title>Deciphering the biology of Mycobacterium tuberculosis from the complete genome sequence.</title>
        <authorList>
            <person name="Cole S.T."/>
            <person name="Brosch R."/>
            <person name="Parkhill J."/>
            <person name="Garnier T."/>
            <person name="Churcher C.M."/>
            <person name="Harris D.E."/>
            <person name="Gordon S.V."/>
            <person name="Eiglmeier K."/>
            <person name="Gas S."/>
            <person name="Barry C.E. III"/>
            <person name="Tekaia F."/>
            <person name="Badcock K."/>
            <person name="Basham D."/>
            <person name="Brown D."/>
            <person name="Chillingworth T."/>
            <person name="Connor R."/>
            <person name="Davies R.M."/>
            <person name="Devlin K."/>
            <person name="Feltwell T."/>
            <person name="Gentles S."/>
            <person name="Hamlin N."/>
            <person name="Holroyd S."/>
            <person name="Hornsby T."/>
            <person name="Jagels K."/>
            <person name="Krogh A."/>
            <person name="McLean J."/>
            <person name="Moule S."/>
            <person name="Murphy L.D."/>
            <person name="Oliver S."/>
            <person name="Osborne J."/>
            <person name="Quail M.A."/>
            <person name="Rajandream M.A."/>
            <person name="Rogers J."/>
            <person name="Rutter S."/>
            <person name="Seeger K."/>
            <person name="Skelton S."/>
            <person name="Squares S."/>
            <person name="Squares R."/>
            <person name="Sulston J.E."/>
            <person name="Taylor K."/>
            <person name="Whitehead S."/>
            <person name="Barrell B.G."/>
        </authorList>
    </citation>
    <scope>NUCLEOTIDE SEQUENCE [LARGE SCALE GENOMIC DNA]</scope>
    <source>
        <strain>ATCC 25618 / H37Rv</strain>
    </source>
</reference>
<reference key="2">
    <citation type="journal article" date="2009" name="J. Bacteriol.">
        <title>Three Mycobacterium tuberculosis Rel toxin-antitoxin modules inhibit mycobacterial growth and are expressed in infected human macrophages.</title>
        <authorList>
            <person name="Korch S.B."/>
            <person name="Contreras H."/>
            <person name="Clark-Curtiss J.E."/>
        </authorList>
    </citation>
    <scope>FUNCTION AS AN ANTITOXIN</scope>
    <scope>FUNCTION AS A TRANSCRIPTIONAL REGULATOR</scope>
    <scope>EXPRESSION IN M.SMEGMATIS</scope>
    <scope>INDUCTION</scope>
    <scope>OPERON STRUCTURE</scope>
    <source>
        <strain>ATCC 25618 / H37Rv</strain>
    </source>
</reference>
<reference key="3">
    <citation type="journal article" date="2009" name="PLoS Genet.">
        <title>Comprehensive functional analysis of Mycobacterium tuberculosis toxin-antitoxin systems: implications for pathogenesis, stress responses, and evolution.</title>
        <authorList>
            <person name="Ramage H.R."/>
            <person name="Connolly L.E."/>
            <person name="Cox J.S."/>
        </authorList>
    </citation>
    <scope>EXPRESSION IN M.SMEGMATIS</scope>
    <scope>FUNCTION AS AN ANTITOXIN</scope>
    <source>
        <strain>ATCC 35801 / TMC 107 / Erdman</strain>
    </source>
</reference>
<reference key="4">
    <citation type="journal article" date="2010" name="PLoS ONE">
        <title>Characterization of the interaction and cross-regulation of three Mycobacterium tuberculosis RelBE modules.</title>
        <authorList>
            <person name="Yang M."/>
            <person name="Gao C."/>
            <person name="Wang Y."/>
            <person name="Zhang H."/>
            <person name="He Z.G."/>
        </authorList>
    </citation>
    <scope>FUNCTION AS AN ANTITOXIN</scope>
    <scope>SUBUNIT</scope>
    <scope>INTERACTION WITH RELE</scope>
    <source>
        <strain>ATCC 25618 / H37Rv</strain>
    </source>
</reference>
<reference key="5">
    <citation type="submission" date="2009-02" db="PDB data bank">
        <title>The crystal structure of the toxin-antitoxin complex RelBE2 (Rv2865-2866) from Mycobacterium tuberculosis.</title>
        <authorList>
            <person name="Miallau L."/>
            <person name="Chernishof I."/>
            <person name="Chiang J."/>
            <person name="Arbing M."/>
            <person name="Cascio D."/>
            <person name="Eisenberg D."/>
        </authorList>
    </citation>
    <scope>X-RAY CRYSTALLOGRAPHY (2.00 ANGSTROMS)</scope>
    <source>
        <strain>ATCC 25618 / H37Rv</strain>
    </source>
</reference>
<accession>O33347</accession>
<accession>L0TDS8</accession>
<dbReference type="EMBL" id="AL123456">
    <property type="protein sequence ID" value="CCP45667.1"/>
    <property type="molecule type" value="Genomic_DNA"/>
</dbReference>
<dbReference type="PIR" id="C70886">
    <property type="entry name" value="C70886"/>
</dbReference>
<dbReference type="RefSeq" id="NP_217381.1">
    <property type="nucleotide sequence ID" value="NC_000962.3"/>
</dbReference>
<dbReference type="RefSeq" id="WP_003414599.1">
    <property type="nucleotide sequence ID" value="NZ_NVQJ01000006.1"/>
</dbReference>
<dbReference type="PDB" id="3G5O">
    <property type="method" value="X-ray"/>
    <property type="resolution" value="2.00 A"/>
    <property type="chains" value="A/D=1-93"/>
</dbReference>
<dbReference type="PDBsum" id="3G5O"/>
<dbReference type="SMR" id="O33347"/>
<dbReference type="DIP" id="DIP-60144N"/>
<dbReference type="FunCoup" id="O33347">
    <property type="interactions" value="1"/>
</dbReference>
<dbReference type="IntAct" id="O33347">
    <property type="interactions" value="1"/>
</dbReference>
<dbReference type="STRING" id="83332.Rv2865"/>
<dbReference type="PaxDb" id="83332-Rv2865"/>
<dbReference type="DNASU" id="887458"/>
<dbReference type="GeneID" id="887458"/>
<dbReference type="KEGG" id="mtu:Rv2865"/>
<dbReference type="KEGG" id="mtv:RVBD_2865"/>
<dbReference type="TubercuList" id="Rv2865"/>
<dbReference type="eggNOG" id="COG2161">
    <property type="taxonomic scope" value="Bacteria"/>
</dbReference>
<dbReference type="InParanoid" id="O33347"/>
<dbReference type="OrthoDB" id="488160at2"/>
<dbReference type="PhylomeDB" id="O33347"/>
<dbReference type="EvolutionaryTrace" id="O33347"/>
<dbReference type="Proteomes" id="UP000001584">
    <property type="component" value="Chromosome"/>
</dbReference>
<dbReference type="GO" id="GO:0003700">
    <property type="term" value="F:DNA-binding transcription factor activity"/>
    <property type="evidence" value="ECO:0000318"/>
    <property type="project" value="GO_Central"/>
</dbReference>
<dbReference type="GO" id="GO:0043565">
    <property type="term" value="F:sequence-specific DNA binding"/>
    <property type="evidence" value="ECO:0000318"/>
    <property type="project" value="GO_Central"/>
</dbReference>
<dbReference type="GO" id="GO:0097351">
    <property type="term" value="F:toxin sequestering activity"/>
    <property type="evidence" value="ECO:0000353"/>
    <property type="project" value="MTBBASE"/>
</dbReference>
<dbReference type="GO" id="GO:0045927">
    <property type="term" value="P:positive regulation of growth"/>
    <property type="evidence" value="ECO:0000315"/>
    <property type="project" value="MTBBASE"/>
</dbReference>
<dbReference type="GO" id="GO:0006355">
    <property type="term" value="P:regulation of DNA-templated transcription"/>
    <property type="evidence" value="ECO:0000314"/>
    <property type="project" value="MTBBASE"/>
</dbReference>
<dbReference type="Gene3D" id="1.10.1220.170">
    <property type="match status" value="1"/>
</dbReference>
<dbReference type="Gene3D" id="3.40.1620.10">
    <property type="entry name" value="YefM-like domain"/>
    <property type="match status" value="1"/>
</dbReference>
<dbReference type="InterPro" id="IPR006442">
    <property type="entry name" value="Antitoxin_Phd/YefM"/>
</dbReference>
<dbReference type="InterPro" id="IPR051405">
    <property type="entry name" value="phD/YefM_antitoxin"/>
</dbReference>
<dbReference type="InterPro" id="IPR036165">
    <property type="entry name" value="YefM-like_sf"/>
</dbReference>
<dbReference type="NCBIfam" id="TIGR01552">
    <property type="entry name" value="phd_fam"/>
    <property type="match status" value="1"/>
</dbReference>
<dbReference type="PANTHER" id="PTHR33713:SF10">
    <property type="entry name" value="ANTITOXIN YAFN"/>
    <property type="match status" value="1"/>
</dbReference>
<dbReference type="PANTHER" id="PTHR33713">
    <property type="entry name" value="ANTITOXIN YAFN-RELATED"/>
    <property type="match status" value="1"/>
</dbReference>
<dbReference type="Pfam" id="PF02604">
    <property type="entry name" value="PhdYeFM_antitox"/>
    <property type="match status" value="1"/>
</dbReference>
<dbReference type="SUPFAM" id="SSF143120">
    <property type="entry name" value="YefM-like"/>
    <property type="match status" value="1"/>
</dbReference>
<comment type="function">
    <text>Antitoxin component of a type II toxin-antitoxin (TA) system. Upon expression in M.smegmatis neutralizes the effect of toxin RelE2.</text>
</comment>
<comment type="function">
    <text>Induces its own promoter, in combination with RelG represses its own promoter. Has been seen to bind DNA in complex with toxin RelG but not alone.</text>
</comment>
<comment type="subunit">
    <text evidence="2">Interacts with toxin RelG, which neutralizes the toxin. Also interacts with toxins RelE and RelK in vitro, in M.smegmatis coexpression with non-cognate toxins increases the toxicity of RelE but not of RelK.</text>
</comment>
<comment type="induction">
    <text evidence="1">Expressed in log phase cells. Also expressed in human macrophages 110 hours after infection. A member of the relFG operon.</text>
</comment>
<comment type="similarity">
    <text evidence="3">Belongs to the phD/YefM antitoxin family.</text>
</comment>
<sequence length="93" mass="10183">MRILPISTIKGKLNEFVDAVSSTQDQITITKNGAPAAVLVGADEWESLQETLYWLAQPGIRESIAEADADIASGRTYGEDEIRAEFGVPRRPH</sequence>
<feature type="chain" id="PRO_0000406202" description="Antitoxin RelF">
    <location>
        <begin position="1"/>
        <end position="93"/>
    </location>
</feature>
<feature type="strand" evidence="4">
    <location>
        <begin position="1"/>
        <end position="5"/>
    </location>
</feature>
<feature type="helix" evidence="4">
    <location>
        <begin position="6"/>
        <end position="9"/>
    </location>
</feature>
<feature type="helix" evidence="4">
    <location>
        <begin position="13"/>
        <end position="21"/>
    </location>
</feature>
<feature type="strand" evidence="4">
    <location>
        <begin position="26"/>
        <end position="31"/>
    </location>
</feature>
<feature type="strand" evidence="4">
    <location>
        <begin position="34"/>
        <end position="41"/>
    </location>
</feature>
<feature type="helix" evidence="4">
    <location>
        <begin position="42"/>
        <end position="55"/>
    </location>
</feature>
<feature type="helix" evidence="4">
    <location>
        <begin position="60"/>
        <end position="73"/>
    </location>
</feature>
<feature type="helix" evidence="4">
    <location>
        <begin position="79"/>
        <end position="86"/>
    </location>
</feature>
<gene>
    <name type="primary">relF</name>
    <name type="synonym">relB2</name>
    <name type="ordered locus">Rv2865</name>
</gene>